<sequence>MGNTFGRLFRVSTFGESHGGGVGVVIDGCPPRLEISQEEIQIDLDRRKPGQSRIVTPRRENDICEIISGVFDGKTLGTPIAILVRNQDARSQDYNEMAEKFRPSHADATYEAKYGIRNWKGGGRSSARETIGRVAAGAIAKKILKSVYNVEIIGYVKRIKDLEAIIDPNTVTLDEVESNIVRCPNGETAAKMIALIDQIRLDKDSIGGVVECVARNVPKGLGEPVFDKLEADLAKGMMSLPASKGFEIGSGFAGTFLTGSEHNDEYFIDNNGEIRTTSNRSGGIQGGISNGENIIIRTAFKPTATIGKEQKTVTRSGEETTLAAKGRHDPCVLPRAVPMVEAMMALVLCDHLLRFQGQCTISDRFF</sequence>
<accession>B0JWQ2</accession>
<dbReference type="EC" id="4.2.3.5" evidence="1"/>
<dbReference type="EMBL" id="AP009552">
    <property type="protein sequence ID" value="BAG01732.1"/>
    <property type="molecule type" value="Genomic_DNA"/>
</dbReference>
<dbReference type="RefSeq" id="WP_012265184.1">
    <property type="nucleotide sequence ID" value="NC_010296.1"/>
</dbReference>
<dbReference type="SMR" id="B0JWQ2"/>
<dbReference type="STRING" id="449447.MAE_19100"/>
<dbReference type="PaxDb" id="449447-MAE_19100"/>
<dbReference type="EnsemblBacteria" id="BAG01732">
    <property type="protein sequence ID" value="BAG01732"/>
    <property type="gene ID" value="MAE_19100"/>
</dbReference>
<dbReference type="KEGG" id="mar:MAE_19100"/>
<dbReference type="PATRIC" id="fig|449447.4.peg.1754"/>
<dbReference type="eggNOG" id="COG0082">
    <property type="taxonomic scope" value="Bacteria"/>
</dbReference>
<dbReference type="HOGENOM" id="CLU_034547_0_1_3"/>
<dbReference type="BioCyc" id="MAER449447:MAE_RS08360-MONOMER"/>
<dbReference type="UniPathway" id="UPA00053">
    <property type="reaction ID" value="UER00090"/>
</dbReference>
<dbReference type="Proteomes" id="UP000001510">
    <property type="component" value="Chromosome"/>
</dbReference>
<dbReference type="GO" id="GO:0005829">
    <property type="term" value="C:cytosol"/>
    <property type="evidence" value="ECO:0007669"/>
    <property type="project" value="TreeGrafter"/>
</dbReference>
<dbReference type="GO" id="GO:0004107">
    <property type="term" value="F:chorismate synthase activity"/>
    <property type="evidence" value="ECO:0007669"/>
    <property type="project" value="UniProtKB-UniRule"/>
</dbReference>
<dbReference type="GO" id="GO:0010181">
    <property type="term" value="F:FMN binding"/>
    <property type="evidence" value="ECO:0007669"/>
    <property type="project" value="TreeGrafter"/>
</dbReference>
<dbReference type="GO" id="GO:0008652">
    <property type="term" value="P:amino acid biosynthetic process"/>
    <property type="evidence" value="ECO:0007669"/>
    <property type="project" value="UniProtKB-KW"/>
</dbReference>
<dbReference type="GO" id="GO:0009073">
    <property type="term" value="P:aromatic amino acid family biosynthetic process"/>
    <property type="evidence" value="ECO:0007669"/>
    <property type="project" value="UniProtKB-KW"/>
</dbReference>
<dbReference type="GO" id="GO:0009423">
    <property type="term" value="P:chorismate biosynthetic process"/>
    <property type="evidence" value="ECO:0007669"/>
    <property type="project" value="UniProtKB-UniRule"/>
</dbReference>
<dbReference type="CDD" id="cd07304">
    <property type="entry name" value="Chorismate_synthase"/>
    <property type="match status" value="1"/>
</dbReference>
<dbReference type="FunFam" id="3.60.150.10:FF:000003">
    <property type="entry name" value="Chorismate synthase"/>
    <property type="match status" value="1"/>
</dbReference>
<dbReference type="Gene3D" id="3.60.150.10">
    <property type="entry name" value="Chorismate synthase AroC"/>
    <property type="match status" value="1"/>
</dbReference>
<dbReference type="HAMAP" id="MF_00300">
    <property type="entry name" value="Chorismate_synth"/>
    <property type="match status" value="1"/>
</dbReference>
<dbReference type="InterPro" id="IPR000453">
    <property type="entry name" value="Chorismate_synth"/>
</dbReference>
<dbReference type="InterPro" id="IPR035904">
    <property type="entry name" value="Chorismate_synth_AroC_sf"/>
</dbReference>
<dbReference type="InterPro" id="IPR020541">
    <property type="entry name" value="Chorismate_synthase_CS"/>
</dbReference>
<dbReference type="NCBIfam" id="TIGR00033">
    <property type="entry name" value="aroC"/>
    <property type="match status" value="1"/>
</dbReference>
<dbReference type="NCBIfam" id="NF003793">
    <property type="entry name" value="PRK05382.1"/>
    <property type="match status" value="1"/>
</dbReference>
<dbReference type="PANTHER" id="PTHR21085">
    <property type="entry name" value="CHORISMATE SYNTHASE"/>
    <property type="match status" value="1"/>
</dbReference>
<dbReference type="PANTHER" id="PTHR21085:SF0">
    <property type="entry name" value="CHORISMATE SYNTHASE"/>
    <property type="match status" value="1"/>
</dbReference>
<dbReference type="Pfam" id="PF01264">
    <property type="entry name" value="Chorismate_synt"/>
    <property type="match status" value="1"/>
</dbReference>
<dbReference type="PIRSF" id="PIRSF001456">
    <property type="entry name" value="Chorismate_synth"/>
    <property type="match status" value="1"/>
</dbReference>
<dbReference type="SUPFAM" id="SSF103263">
    <property type="entry name" value="Chorismate synthase, AroC"/>
    <property type="match status" value="1"/>
</dbReference>
<dbReference type="PROSITE" id="PS00787">
    <property type="entry name" value="CHORISMATE_SYNTHASE_1"/>
    <property type="match status" value="1"/>
</dbReference>
<dbReference type="PROSITE" id="PS00788">
    <property type="entry name" value="CHORISMATE_SYNTHASE_2"/>
    <property type="match status" value="1"/>
</dbReference>
<dbReference type="PROSITE" id="PS00789">
    <property type="entry name" value="CHORISMATE_SYNTHASE_3"/>
    <property type="match status" value="1"/>
</dbReference>
<gene>
    <name evidence="1" type="primary">aroC</name>
    <name type="ordered locus">MAE_19100</name>
</gene>
<proteinExistence type="inferred from homology"/>
<evidence type="ECO:0000255" key="1">
    <source>
        <dbReference type="HAMAP-Rule" id="MF_00300"/>
    </source>
</evidence>
<keyword id="KW-0028">Amino-acid biosynthesis</keyword>
<keyword id="KW-0057">Aromatic amino acid biosynthesis</keyword>
<keyword id="KW-0274">FAD</keyword>
<keyword id="KW-0285">Flavoprotein</keyword>
<keyword id="KW-0288">FMN</keyword>
<keyword id="KW-0456">Lyase</keyword>
<keyword id="KW-0521">NADP</keyword>
<feature type="chain" id="PRO_1000078999" description="Chorismate synthase">
    <location>
        <begin position="1"/>
        <end position="366"/>
    </location>
</feature>
<feature type="binding site" evidence="1">
    <location>
        <position position="47"/>
    </location>
    <ligand>
        <name>NADP(+)</name>
        <dbReference type="ChEBI" id="CHEBI:58349"/>
    </ligand>
</feature>
<feature type="binding site" evidence="1">
    <location>
        <position position="53"/>
    </location>
    <ligand>
        <name>NADP(+)</name>
        <dbReference type="ChEBI" id="CHEBI:58349"/>
    </ligand>
</feature>
<feature type="binding site" evidence="1">
    <location>
        <begin position="124"/>
        <end position="126"/>
    </location>
    <ligand>
        <name>FMN</name>
        <dbReference type="ChEBI" id="CHEBI:58210"/>
    </ligand>
</feature>
<feature type="binding site" evidence="1">
    <location>
        <position position="286"/>
    </location>
    <ligand>
        <name>FMN</name>
        <dbReference type="ChEBI" id="CHEBI:58210"/>
    </ligand>
</feature>
<feature type="binding site" evidence="1">
    <location>
        <begin position="301"/>
        <end position="305"/>
    </location>
    <ligand>
        <name>FMN</name>
        <dbReference type="ChEBI" id="CHEBI:58210"/>
    </ligand>
</feature>
<feature type="binding site" evidence="1">
    <location>
        <position position="327"/>
    </location>
    <ligand>
        <name>FMN</name>
        <dbReference type="ChEBI" id="CHEBI:58210"/>
    </ligand>
</feature>
<protein>
    <recommendedName>
        <fullName evidence="1">Chorismate synthase</fullName>
        <shortName evidence="1">CS</shortName>
        <ecNumber evidence="1">4.2.3.5</ecNumber>
    </recommendedName>
    <alternativeName>
        <fullName evidence="1">5-enolpyruvylshikimate-3-phosphate phospholyase</fullName>
    </alternativeName>
</protein>
<organism>
    <name type="scientific">Microcystis aeruginosa (strain NIES-843 / IAM M-2473)</name>
    <dbReference type="NCBI Taxonomy" id="449447"/>
    <lineage>
        <taxon>Bacteria</taxon>
        <taxon>Bacillati</taxon>
        <taxon>Cyanobacteriota</taxon>
        <taxon>Cyanophyceae</taxon>
        <taxon>Oscillatoriophycideae</taxon>
        <taxon>Chroococcales</taxon>
        <taxon>Microcystaceae</taxon>
        <taxon>Microcystis</taxon>
    </lineage>
</organism>
<name>AROC_MICAN</name>
<reference key="1">
    <citation type="journal article" date="2007" name="DNA Res.">
        <title>Complete genomic structure of the bloom-forming toxic cyanobacterium Microcystis aeruginosa NIES-843.</title>
        <authorList>
            <person name="Kaneko T."/>
            <person name="Nakajima N."/>
            <person name="Okamoto S."/>
            <person name="Suzuki I."/>
            <person name="Tanabe Y."/>
            <person name="Tamaoki M."/>
            <person name="Nakamura Y."/>
            <person name="Kasai F."/>
            <person name="Watanabe A."/>
            <person name="Kawashima K."/>
            <person name="Kishida Y."/>
            <person name="Ono A."/>
            <person name="Shimizu Y."/>
            <person name="Takahashi C."/>
            <person name="Minami C."/>
            <person name="Fujishiro T."/>
            <person name="Kohara M."/>
            <person name="Katoh M."/>
            <person name="Nakazaki N."/>
            <person name="Nakayama S."/>
            <person name="Yamada M."/>
            <person name="Tabata S."/>
            <person name="Watanabe M.M."/>
        </authorList>
    </citation>
    <scope>NUCLEOTIDE SEQUENCE [LARGE SCALE GENOMIC DNA]</scope>
    <source>
        <strain>NIES-843 / IAM M-247</strain>
    </source>
</reference>
<comment type="function">
    <text evidence="1">Catalyzes the anti-1,4-elimination of the C-3 phosphate and the C-6 proR hydrogen from 5-enolpyruvylshikimate-3-phosphate (EPSP) to yield chorismate, which is the branch point compound that serves as the starting substrate for the three terminal pathways of aromatic amino acid biosynthesis. This reaction introduces a second double bond into the aromatic ring system.</text>
</comment>
<comment type="catalytic activity">
    <reaction evidence="1">
        <text>5-O-(1-carboxyvinyl)-3-phosphoshikimate = chorismate + phosphate</text>
        <dbReference type="Rhea" id="RHEA:21020"/>
        <dbReference type="ChEBI" id="CHEBI:29748"/>
        <dbReference type="ChEBI" id="CHEBI:43474"/>
        <dbReference type="ChEBI" id="CHEBI:57701"/>
        <dbReference type="EC" id="4.2.3.5"/>
    </reaction>
</comment>
<comment type="cofactor">
    <cofactor evidence="1">
        <name>FMNH2</name>
        <dbReference type="ChEBI" id="CHEBI:57618"/>
    </cofactor>
    <text evidence="1">Reduced FMN (FMNH(2)).</text>
</comment>
<comment type="pathway">
    <text evidence="1">Metabolic intermediate biosynthesis; chorismate biosynthesis; chorismate from D-erythrose 4-phosphate and phosphoenolpyruvate: step 7/7.</text>
</comment>
<comment type="subunit">
    <text evidence="1">Homotetramer.</text>
</comment>
<comment type="similarity">
    <text evidence="1">Belongs to the chorismate synthase family.</text>
</comment>